<organism>
    <name type="scientific">Providencia stuartii</name>
    <dbReference type="NCBI Taxonomy" id="588"/>
    <lineage>
        <taxon>Bacteria</taxon>
        <taxon>Pseudomonadati</taxon>
        <taxon>Pseudomonadota</taxon>
        <taxon>Gammaproteobacteria</taxon>
        <taxon>Enterobacterales</taxon>
        <taxon>Morganellaceae</taxon>
        <taxon>Providencia</taxon>
    </lineage>
</organism>
<name>AARP_PROST</name>
<proteinExistence type="predicted"/>
<gene>
    <name type="primary">aarP</name>
</gene>
<keyword id="KW-0010">Activator</keyword>
<keyword id="KW-0238">DNA-binding</keyword>
<keyword id="KW-0804">Transcription</keyword>
<keyword id="KW-0805">Transcription regulation</keyword>
<protein>
    <recommendedName>
        <fullName>HTH-type transcriptional activator AarP</fullName>
    </recommendedName>
</protein>
<evidence type="ECO:0000255" key="1">
    <source>
        <dbReference type="PROSITE-ProRule" id="PRU00593"/>
    </source>
</evidence>
<comment type="function">
    <text>Transcriptional activator of 2'-N-acetyltransferase.</text>
</comment>
<feature type="chain" id="PRO_0000194493" description="HTH-type transcriptional activator AarP">
    <location>
        <begin position="1"/>
        <end position="135"/>
    </location>
</feature>
<feature type="domain" description="HTH araC/xylS-type" evidence="1">
    <location>
        <begin position="22"/>
        <end position="120"/>
    </location>
</feature>
<feature type="DNA-binding region" description="H-T-H motif" evidence="1">
    <location>
        <begin position="39"/>
        <end position="60"/>
    </location>
</feature>
<feature type="DNA-binding region" description="H-T-H motif" evidence="1">
    <location>
        <begin position="87"/>
        <end position="110"/>
    </location>
</feature>
<accession>P43463</accession>
<reference key="1">
    <citation type="journal article" date="1995" name="J. Bacteriol.">
        <title>Identification and analysis of aarP, a transcriptional activator of the 2'-N-acetyltransferase in Providencia stuartii.</title>
        <authorList>
            <person name="Macinga D.R."/>
            <person name="Parojcic M.M."/>
            <person name="Rather P.N."/>
        </authorList>
    </citation>
    <scope>NUCLEOTIDE SEQUENCE [GENOMIC DNA]</scope>
    <source>
        <strain>PR50</strain>
    </source>
</reference>
<sequence>MYNKLPISYSRKHTQFQSSIISEILVWIEGNLTNRLSLDDIAQHSGYTKWHLQRVFRKIVGMPLGEYIRRRRICEAAKELQTTNLQVIDIALKYQFDSQQSFAKRFKAYLGISPSLYRLSDTGYNDLLLLEPKVA</sequence>
<dbReference type="EMBL" id="L38718">
    <property type="protein sequence ID" value="AAA97483.1"/>
    <property type="molecule type" value="Genomic_DNA"/>
</dbReference>
<dbReference type="RefSeq" id="WP_004924490.1">
    <property type="nucleotide sequence ID" value="NZ_WLUM01000012.1"/>
</dbReference>
<dbReference type="SMR" id="P43463"/>
<dbReference type="STRING" id="588.BGK56_10975"/>
<dbReference type="OMA" id="IFINEML"/>
<dbReference type="GO" id="GO:0003700">
    <property type="term" value="F:DNA-binding transcription factor activity"/>
    <property type="evidence" value="ECO:0007669"/>
    <property type="project" value="InterPro"/>
</dbReference>
<dbReference type="GO" id="GO:0043565">
    <property type="term" value="F:sequence-specific DNA binding"/>
    <property type="evidence" value="ECO:0007669"/>
    <property type="project" value="InterPro"/>
</dbReference>
<dbReference type="Gene3D" id="1.10.10.60">
    <property type="entry name" value="Homeodomain-like"/>
    <property type="match status" value="2"/>
</dbReference>
<dbReference type="InterPro" id="IPR009057">
    <property type="entry name" value="Homeodomain-like_sf"/>
</dbReference>
<dbReference type="InterPro" id="IPR018060">
    <property type="entry name" value="HTH_AraC"/>
</dbReference>
<dbReference type="InterPro" id="IPR018062">
    <property type="entry name" value="HTH_AraC-typ_CS"/>
</dbReference>
<dbReference type="InterPro" id="IPR050959">
    <property type="entry name" value="MarA-like"/>
</dbReference>
<dbReference type="InterPro" id="IPR020449">
    <property type="entry name" value="Tscrpt_reg_AraC-type_HTH"/>
</dbReference>
<dbReference type="PANTHER" id="PTHR47504">
    <property type="entry name" value="RIGHT ORIGIN-BINDING PROTEIN"/>
    <property type="match status" value="1"/>
</dbReference>
<dbReference type="PANTHER" id="PTHR47504:SF5">
    <property type="entry name" value="RIGHT ORIGIN-BINDING PROTEIN"/>
    <property type="match status" value="1"/>
</dbReference>
<dbReference type="Pfam" id="PF12833">
    <property type="entry name" value="HTH_18"/>
    <property type="match status" value="1"/>
</dbReference>
<dbReference type="PRINTS" id="PR00032">
    <property type="entry name" value="HTHARAC"/>
</dbReference>
<dbReference type="SMART" id="SM00342">
    <property type="entry name" value="HTH_ARAC"/>
    <property type="match status" value="1"/>
</dbReference>
<dbReference type="SUPFAM" id="SSF46689">
    <property type="entry name" value="Homeodomain-like"/>
    <property type="match status" value="2"/>
</dbReference>
<dbReference type="PROSITE" id="PS00041">
    <property type="entry name" value="HTH_ARAC_FAMILY_1"/>
    <property type="match status" value="1"/>
</dbReference>
<dbReference type="PROSITE" id="PS01124">
    <property type="entry name" value="HTH_ARAC_FAMILY_2"/>
    <property type="match status" value="1"/>
</dbReference>